<proteinExistence type="inferred from homology"/>
<evidence type="ECO:0000255" key="1">
    <source>
        <dbReference type="HAMAP-Rule" id="MF_01026"/>
    </source>
</evidence>
<keyword id="KW-0004">4Fe-4S</keyword>
<keyword id="KW-0028">Amino-acid biosynthesis</keyword>
<keyword id="KW-0100">Branched-chain amino acid biosynthesis</keyword>
<keyword id="KW-0408">Iron</keyword>
<keyword id="KW-0411">Iron-sulfur</keyword>
<keyword id="KW-0432">Leucine biosynthesis</keyword>
<keyword id="KW-0456">Lyase</keyword>
<keyword id="KW-0479">Metal-binding</keyword>
<gene>
    <name evidence="1" type="primary">leuC</name>
    <name type="ordered locus">Mflv_4227</name>
</gene>
<dbReference type="EC" id="4.2.1.33" evidence="1"/>
<dbReference type="EMBL" id="CP000656">
    <property type="protein sequence ID" value="ABP46696.1"/>
    <property type="molecule type" value="Genomic_DNA"/>
</dbReference>
<dbReference type="SMR" id="A4TE23"/>
<dbReference type="STRING" id="350054.Mflv_4227"/>
<dbReference type="KEGG" id="mgi:Mflv_4227"/>
<dbReference type="eggNOG" id="COG0065">
    <property type="taxonomic scope" value="Bacteria"/>
</dbReference>
<dbReference type="HOGENOM" id="CLU_006714_3_4_11"/>
<dbReference type="OrthoDB" id="9802769at2"/>
<dbReference type="UniPathway" id="UPA00048">
    <property type="reaction ID" value="UER00071"/>
</dbReference>
<dbReference type="GO" id="GO:0003861">
    <property type="term" value="F:3-isopropylmalate dehydratase activity"/>
    <property type="evidence" value="ECO:0007669"/>
    <property type="project" value="UniProtKB-UniRule"/>
</dbReference>
<dbReference type="GO" id="GO:0051539">
    <property type="term" value="F:4 iron, 4 sulfur cluster binding"/>
    <property type="evidence" value="ECO:0007669"/>
    <property type="project" value="UniProtKB-KW"/>
</dbReference>
<dbReference type="GO" id="GO:0046872">
    <property type="term" value="F:metal ion binding"/>
    <property type="evidence" value="ECO:0007669"/>
    <property type="project" value="UniProtKB-KW"/>
</dbReference>
<dbReference type="GO" id="GO:0009098">
    <property type="term" value="P:L-leucine biosynthetic process"/>
    <property type="evidence" value="ECO:0007669"/>
    <property type="project" value="UniProtKB-UniRule"/>
</dbReference>
<dbReference type="CDD" id="cd01583">
    <property type="entry name" value="IPMI"/>
    <property type="match status" value="1"/>
</dbReference>
<dbReference type="FunFam" id="3.30.499.10:FF:000007">
    <property type="entry name" value="3-isopropylmalate dehydratase large subunit"/>
    <property type="match status" value="1"/>
</dbReference>
<dbReference type="Gene3D" id="3.30.499.10">
    <property type="entry name" value="Aconitase, domain 3"/>
    <property type="match status" value="2"/>
</dbReference>
<dbReference type="HAMAP" id="MF_01026">
    <property type="entry name" value="LeuC_type1"/>
    <property type="match status" value="1"/>
</dbReference>
<dbReference type="InterPro" id="IPR004430">
    <property type="entry name" value="3-IsopropMal_deHydase_lsu"/>
</dbReference>
<dbReference type="InterPro" id="IPR015931">
    <property type="entry name" value="Acnase/IPM_dHydase_lsu_aba_1/3"/>
</dbReference>
<dbReference type="InterPro" id="IPR001030">
    <property type="entry name" value="Acoase/IPM_deHydtase_lsu_aba"/>
</dbReference>
<dbReference type="InterPro" id="IPR018136">
    <property type="entry name" value="Aconitase_4Fe-4S_BS"/>
</dbReference>
<dbReference type="InterPro" id="IPR036008">
    <property type="entry name" value="Aconitase_4Fe-4S_dom"/>
</dbReference>
<dbReference type="InterPro" id="IPR050067">
    <property type="entry name" value="IPM_dehydratase_rel_enz"/>
</dbReference>
<dbReference type="InterPro" id="IPR033941">
    <property type="entry name" value="IPMI_cat"/>
</dbReference>
<dbReference type="NCBIfam" id="TIGR00170">
    <property type="entry name" value="leuC"/>
    <property type="match status" value="1"/>
</dbReference>
<dbReference type="NCBIfam" id="NF004016">
    <property type="entry name" value="PRK05478.1"/>
    <property type="match status" value="1"/>
</dbReference>
<dbReference type="NCBIfam" id="NF009116">
    <property type="entry name" value="PRK12466.1"/>
    <property type="match status" value="1"/>
</dbReference>
<dbReference type="PANTHER" id="PTHR43822:SF9">
    <property type="entry name" value="3-ISOPROPYLMALATE DEHYDRATASE"/>
    <property type="match status" value="1"/>
</dbReference>
<dbReference type="PANTHER" id="PTHR43822">
    <property type="entry name" value="HOMOACONITASE, MITOCHONDRIAL-RELATED"/>
    <property type="match status" value="1"/>
</dbReference>
<dbReference type="Pfam" id="PF00330">
    <property type="entry name" value="Aconitase"/>
    <property type="match status" value="1"/>
</dbReference>
<dbReference type="PRINTS" id="PR00415">
    <property type="entry name" value="ACONITASE"/>
</dbReference>
<dbReference type="SUPFAM" id="SSF53732">
    <property type="entry name" value="Aconitase iron-sulfur domain"/>
    <property type="match status" value="1"/>
</dbReference>
<dbReference type="PROSITE" id="PS00450">
    <property type="entry name" value="ACONITASE_1"/>
    <property type="match status" value="1"/>
</dbReference>
<dbReference type="PROSITE" id="PS01244">
    <property type="entry name" value="ACONITASE_2"/>
    <property type="match status" value="1"/>
</dbReference>
<name>LEUC_MYCGI</name>
<protein>
    <recommendedName>
        <fullName evidence="1">3-isopropylmalate dehydratase large subunit</fullName>
        <ecNumber evidence="1">4.2.1.33</ecNumber>
    </recommendedName>
    <alternativeName>
        <fullName evidence="1">Alpha-IPM isomerase</fullName>
        <shortName evidence="1">IPMI</shortName>
    </alternativeName>
    <alternativeName>
        <fullName evidence="1">Isopropylmalate isomerase</fullName>
    </alternativeName>
</protein>
<sequence>MAVANQPRTLAEKVWSDHVVVSGSGEGAAREPDLIYIDLHLVHEVTSPQAFDGLRLAGRPVRRPDLTIATEDHNVPTVDIDKPIADPVSRTQVETLRRNCEEFGIRLHPMGDVEQGIVHIIGPQLGLTQPGTTVVCGDSHTSTHGAFGALAMGIGTSEVEHVLATQTLPLRPFKTMAVNVDGELPPGVSAKDVILAVIAKIGTGGGQGHVIEYRGSAIESLSMEGRMTICNMSIEAGARAGMIAPDETTFEFLKGRPHAPQGADWDAAVEAWKLLRTDEGAQFDTEVYIDAASLSPFVTWGTNPGQGVPLSDSVPDPEMIFDEGERSAVEKALAYMDLRPGTPMREIPVDAVFVGSCTNGRIEDLRVVADVLRGRTVADDVRMLVVPGSMRVRAQAEAEGLGEIFTAAGAEWRQAGCSMCLGMNPDQLAPGERCASTSNRNFEGRQGKGGRTHLVSPAVAAATAVRGTLSSPADLTAEPTR</sequence>
<comment type="function">
    <text evidence="1">Catalyzes the isomerization between 2-isopropylmalate and 3-isopropylmalate, via the formation of 2-isopropylmaleate.</text>
</comment>
<comment type="catalytic activity">
    <reaction evidence="1">
        <text>(2R,3S)-3-isopropylmalate = (2S)-2-isopropylmalate</text>
        <dbReference type="Rhea" id="RHEA:32287"/>
        <dbReference type="ChEBI" id="CHEBI:1178"/>
        <dbReference type="ChEBI" id="CHEBI:35121"/>
        <dbReference type="EC" id="4.2.1.33"/>
    </reaction>
</comment>
<comment type="cofactor">
    <cofactor evidence="1">
        <name>[4Fe-4S] cluster</name>
        <dbReference type="ChEBI" id="CHEBI:49883"/>
    </cofactor>
    <text evidence="1">Binds 1 [4Fe-4S] cluster per subunit.</text>
</comment>
<comment type="pathway">
    <text evidence="1">Amino-acid biosynthesis; L-leucine biosynthesis; L-leucine from 3-methyl-2-oxobutanoate: step 2/4.</text>
</comment>
<comment type="subunit">
    <text evidence="1">Heterodimer of LeuC and LeuD.</text>
</comment>
<comment type="similarity">
    <text evidence="1">Belongs to the aconitase/IPM isomerase family. LeuC type 1 subfamily.</text>
</comment>
<organism>
    <name type="scientific">Mycolicibacterium gilvum (strain PYR-GCK)</name>
    <name type="common">Mycobacterium gilvum (strain PYR-GCK)</name>
    <dbReference type="NCBI Taxonomy" id="350054"/>
    <lineage>
        <taxon>Bacteria</taxon>
        <taxon>Bacillati</taxon>
        <taxon>Actinomycetota</taxon>
        <taxon>Actinomycetes</taxon>
        <taxon>Mycobacteriales</taxon>
        <taxon>Mycobacteriaceae</taxon>
        <taxon>Mycolicibacterium</taxon>
    </lineage>
</organism>
<accession>A4TE23</accession>
<reference key="1">
    <citation type="submission" date="2007-04" db="EMBL/GenBank/DDBJ databases">
        <title>Complete sequence of chromosome of Mycobacterium gilvum PYR-GCK.</title>
        <authorList>
            <consortium name="US DOE Joint Genome Institute"/>
            <person name="Copeland A."/>
            <person name="Lucas S."/>
            <person name="Lapidus A."/>
            <person name="Barry K."/>
            <person name="Detter J.C."/>
            <person name="Glavina del Rio T."/>
            <person name="Hammon N."/>
            <person name="Israni S."/>
            <person name="Dalin E."/>
            <person name="Tice H."/>
            <person name="Pitluck S."/>
            <person name="Chain P."/>
            <person name="Malfatti S."/>
            <person name="Shin M."/>
            <person name="Vergez L."/>
            <person name="Schmutz J."/>
            <person name="Larimer F."/>
            <person name="Land M."/>
            <person name="Hauser L."/>
            <person name="Kyrpides N."/>
            <person name="Mikhailova N."/>
            <person name="Miller C."/>
            <person name="Richardson P."/>
        </authorList>
    </citation>
    <scope>NUCLEOTIDE SEQUENCE [LARGE SCALE GENOMIC DNA]</scope>
    <source>
        <strain>PYR-GCK</strain>
    </source>
</reference>
<feature type="chain" id="PRO_1000084217" description="3-isopropylmalate dehydratase large subunit">
    <location>
        <begin position="1"/>
        <end position="481"/>
    </location>
</feature>
<feature type="binding site" evidence="1">
    <location>
        <position position="357"/>
    </location>
    <ligand>
        <name>[4Fe-4S] cluster</name>
        <dbReference type="ChEBI" id="CHEBI:49883"/>
    </ligand>
</feature>
<feature type="binding site" evidence="1">
    <location>
        <position position="417"/>
    </location>
    <ligand>
        <name>[4Fe-4S] cluster</name>
        <dbReference type="ChEBI" id="CHEBI:49883"/>
    </ligand>
</feature>
<feature type="binding site" evidence="1">
    <location>
        <position position="420"/>
    </location>
    <ligand>
        <name>[4Fe-4S] cluster</name>
        <dbReference type="ChEBI" id="CHEBI:49883"/>
    </ligand>
</feature>